<feature type="chain" id="PRO_0000432565" description="Isocitrate lyase 2">
    <location>
        <begin position="1"/>
        <end position="766"/>
    </location>
</feature>
<feature type="active site" description="Proton acceptor" evidence="1">
    <location>
        <position position="215"/>
    </location>
</feature>
<feature type="binding site" evidence="1">
    <location>
        <begin position="106"/>
        <end position="108"/>
    </location>
    <ligand>
        <name>substrate</name>
    </ligand>
</feature>
<feature type="binding site" evidence="1">
    <location>
        <position position="177"/>
    </location>
    <ligand>
        <name>Mg(2+)</name>
        <dbReference type="ChEBI" id="CHEBI:18420"/>
    </ligand>
</feature>
<feature type="binding site" evidence="1">
    <location>
        <begin position="216"/>
        <end position="217"/>
    </location>
    <ligand>
        <name>substrate</name>
    </ligand>
</feature>
<feature type="binding site" evidence="1">
    <location>
        <position position="252"/>
    </location>
    <ligand>
        <name>substrate</name>
    </ligand>
</feature>
<feature type="binding site" evidence="1">
    <location>
        <begin position="487"/>
        <end position="491"/>
    </location>
    <ligand>
        <name>substrate</name>
    </ligand>
</feature>
<feature type="binding site" evidence="1">
    <location>
        <position position="522"/>
    </location>
    <ligand>
        <name>substrate</name>
    </ligand>
</feature>
<dbReference type="EC" id="4.1.3.1" evidence="2"/>
<dbReference type="EC" id="4.1.3.30" evidence="2"/>
<dbReference type="EMBL" id="AP012340">
    <property type="protein sequence ID" value="BAL65901.1"/>
    <property type="molecule type" value="Genomic_DNA"/>
</dbReference>
<dbReference type="SMR" id="H8F3R6"/>
<dbReference type="KEGG" id="mtn:ERDMAN_2108"/>
<dbReference type="PATRIC" id="fig|652616.3.peg.2143"/>
<dbReference type="HOGENOM" id="CLU_019214_1_0_11"/>
<dbReference type="UniPathway" id="UPA00703">
    <property type="reaction ID" value="UER00719"/>
</dbReference>
<dbReference type="GO" id="GO:0004451">
    <property type="term" value="F:isocitrate lyase activity"/>
    <property type="evidence" value="ECO:0007669"/>
    <property type="project" value="UniProtKB-EC"/>
</dbReference>
<dbReference type="GO" id="GO:0046872">
    <property type="term" value="F:metal ion binding"/>
    <property type="evidence" value="ECO:0007669"/>
    <property type="project" value="UniProtKB-KW"/>
</dbReference>
<dbReference type="GO" id="GO:0046421">
    <property type="term" value="F:methylisocitrate lyase activity"/>
    <property type="evidence" value="ECO:0007669"/>
    <property type="project" value="UniProtKB-EC"/>
</dbReference>
<dbReference type="GO" id="GO:0006097">
    <property type="term" value="P:glyoxylate cycle"/>
    <property type="evidence" value="ECO:0007669"/>
    <property type="project" value="UniProtKB-UniPathway"/>
</dbReference>
<dbReference type="GO" id="GO:0006099">
    <property type="term" value="P:tricarboxylic acid cycle"/>
    <property type="evidence" value="ECO:0007669"/>
    <property type="project" value="UniProtKB-KW"/>
</dbReference>
<dbReference type="CDD" id="cd00377">
    <property type="entry name" value="ICL_PEPM"/>
    <property type="match status" value="1"/>
</dbReference>
<dbReference type="FunFam" id="3.20.20.60:FF:000024">
    <property type="entry name" value="Isocitrate lyase"/>
    <property type="match status" value="1"/>
</dbReference>
<dbReference type="Gene3D" id="1.10.10.850">
    <property type="match status" value="1"/>
</dbReference>
<dbReference type="Gene3D" id="3.20.20.60">
    <property type="entry name" value="Phosphoenolpyruvate-binding domains"/>
    <property type="match status" value="1"/>
</dbReference>
<dbReference type="InterPro" id="IPR039556">
    <property type="entry name" value="ICL/PEPM"/>
</dbReference>
<dbReference type="InterPro" id="IPR006254">
    <property type="entry name" value="Isocitrate_lyase"/>
</dbReference>
<dbReference type="InterPro" id="IPR018523">
    <property type="entry name" value="Isocitrate_lyase_ph_CS"/>
</dbReference>
<dbReference type="InterPro" id="IPR015813">
    <property type="entry name" value="Pyrv/PenolPyrv_kinase-like_dom"/>
</dbReference>
<dbReference type="InterPro" id="IPR040442">
    <property type="entry name" value="Pyrv_kinase-like_dom_sf"/>
</dbReference>
<dbReference type="PANTHER" id="PTHR21631:SF3">
    <property type="entry name" value="BIFUNCTIONAL GLYOXYLATE CYCLE PROTEIN"/>
    <property type="match status" value="1"/>
</dbReference>
<dbReference type="PANTHER" id="PTHR21631">
    <property type="entry name" value="ISOCITRATE LYASE/MALATE SYNTHASE"/>
    <property type="match status" value="1"/>
</dbReference>
<dbReference type="Pfam" id="PF00463">
    <property type="entry name" value="ICL"/>
    <property type="match status" value="2"/>
</dbReference>
<dbReference type="SUPFAM" id="SSF51621">
    <property type="entry name" value="Phosphoenolpyruvate/pyruvate domain"/>
    <property type="match status" value="1"/>
</dbReference>
<dbReference type="PROSITE" id="PS00161">
    <property type="entry name" value="ISOCITRATE_LYASE"/>
    <property type="match status" value="1"/>
</dbReference>
<evidence type="ECO:0000250" key="1">
    <source>
        <dbReference type="UniProtKB" id="P9WKK7"/>
    </source>
</evidence>
<evidence type="ECO:0000269" key="2">
    <source>
    </source>
</evidence>
<evidence type="ECO:0000303" key="3">
    <source>
    </source>
</evidence>
<evidence type="ECO:0000305" key="4"/>
<evidence type="ECO:0000305" key="5">
    <source>
    </source>
</evidence>
<gene>
    <name type="primary">aceAb</name>
    <name type="ordered locus">ERDMAN_2108</name>
</gene>
<name>ACEA2_MYCTE</name>
<accession>H8F3R6</accession>
<comment type="function">
    <text evidence="2">Involved in the persistence and virulence of M.tuberculosis. Catalyzes the reversible formation of succinate and glyoxylate from isocitrate, a key step of the glyoxylate cycle, which operates as an anaplerotic route for replenishing the tricarboxylic acid cycle during growth on fatty acid substrates. It also catalyzes the formation of pyruvate and succinate from 2-methylisocitrate, a key step in the methylcitrate cycle (propionate degradation route).</text>
</comment>
<comment type="catalytic activity">
    <reaction evidence="2">
        <text>D-threo-isocitrate = glyoxylate + succinate</text>
        <dbReference type="Rhea" id="RHEA:13245"/>
        <dbReference type="ChEBI" id="CHEBI:15562"/>
        <dbReference type="ChEBI" id="CHEBI:30031"/>
        <dbReference type="ChEBI" id="CHEBI:36655"/>
        <dbReference type="EC" id="4.1.3.1"/>
    </reaction>
</comment>
<comment type="catalytic activity">
    <reaction evidence="2">
        <text>(2S,3R)-3-hydroxybutane-1,2,3-tricarboxylate = pyruvate + succinate</text>
        <dbReference type="Rhea" id="RHEA:16809"/>
        <dbReference type="ChEBI" id="CHEBI:15361"/>
        <dbReference type="ChEBI" id="CHEBI:30031"/>
        <dbReference type="ChEBI" id="CHEBI:57429"/>
        <dbReference type="EC" id="4.1.3.30"/>
    </reaction>
</comment>
<comment type="cofactor">
    <cofactor evidence="1">
        <name>Mg(2+)</name>
        <dbReference type="ChEBI" id="CHEBI:18420"/>
    </cofactor>
</comment>
<comment type="pathway">
    <text evidence="5">Carbohydrate metabolism; glyoxylate cycle; (S)-malate from isocitrate: step 1/2.</text>
</comment>
<comment type="disruption phenotype">
    <text evidence="2">Deletion of icl2 in cells growing on 0.2% propionate shows a slightly decrease of both isocitrate and methylisocitrate lyase activity.</text>
</comment>
<comment type="miscellaneous">
    <text evidence="2">Cell growing on 0.2% glucose show barely detectable isocitrate and methylisocitrate lyase activities. On 0.1% and 0.2% propionate, the lyase activities increase more than 10 and 100-fold, respectively.</text>
</comment>
<comment type="similarity">
    <text evidence="4">Belongs to the isocitrate lyase/PEP mutase superfamily. Isocitrate lyase family.</text>
</comment>
<protein>
    <recommendedName>
        <fullName evidence="3">Isocitrate lyase 2</fullName>
        <shortName evidence="3">ICL2</shortName>
        <ecNumber evidence="2">4.1.3.1</ecNumber>
    </recommendedName>
    <alternativeName>
        <fullName evidence="3">Isocitrase</fullName>
    </alternativeName>
    <alternativeName>
        <fullName evidence="3">Isocitratase</fullName>
    </alternativeName>
    <alternativeName>
        <fullName evidence="3">Methylisocitrate lyase</fullName>
        <shortName evidence="3">MICA</shortName>
        <ecNumber evidence="2">4.1.3.30</ecNumber>
    </alternativeName>
</protein>
<keyword id="KW-0329">Glyoxylate bypass</keyword>
<keyword id="KW-0456">Lyase</keyword>
<keyword id="KW-0460">Magnesium</keyword>
<keyword id="KW-0479">Metal-binding</keyword>
<keyword id="KW-0816">Tricarboxylic acid cycle</keyword>
<proteinExistence type="evidence at protein level"/>
<reference key="1">
    <citation type="journal article" date="2012" name="J. Bacteriol.">
        <title>Complete annotated genome sequence of Mycobacterium tuberculosis Erdman.</title>
        <authorList>
            <person name="Miyoshi-Akiyama T."/>
            <person name="Matsumura K."/>
            <person name="Iwai H."/>
            <person name="Funatogawa K."/>
            <person name="Kirikae T."/>
        </authorList>
    </citation>
    <scope>NUCLEOTIDE SEQUENCE [LARGE SCALE GENOMIC DNA]</scope>
    <source>
        <strain>ATCC 35801 / TMC 107 / Erdman</strain>
    </source>
</reference>
<reference key="2">
    <citation type="journal article" date="2006" name="Mol. Microbiol.">
        <title>Role of the methylcitrate cycle in Mycobacterium tuberculosis metabolism, intracellular growth, and virulence.</title>
        <authorList>
            <person name="Munoz-Elias E.J."/>
            <person name="Upton A.M."/>
            <person name="Cherian J."/>
            <person name="McKinney J.D."/>
        </authorList>
    </citation>
    <scope>FUNCTION</scope>
    <scope>CATALYTIC ACTIVITY</scope>
    <scope>DISRUPTION PHENOTYPE</scope>
    <source>
        <strain>ATCC 35801 / TMC 107 / Erdman</strain>
    </source>
</reference>
<organism>
    <name type="scientific">Mycobacterium tuberculosis (strain ATCC 35801 / TMC 107 / Erdman)</name>
    <dbReference type="NCBI Taxonomy" id="652616"/>
    <lineage>
        <taxon>Bacteria</taxon>
        <taxon>Bacillati</taxon>
        <taxon>Actinomycetota</taxon>
        <taxon>Actinomycetes</taxon>
        <taxon>Mycobacteriales</taxon>
        <taxon>Mycobacteriaceae</taxon>
        <taxon>Mycobacterium</taxon>
        <taxon>Mycobacterium tuberculosis complex</taxon>
    </lineage>
</organism>
<sequence length="766" mass="85320">MAIAETDTEVHTPFEQDFEKDVAATQRYFDSSRFAGIIRLYTARQVVEQRGTIPVDHIVAREAAGAFYERLRELFAARKSITTFGPYSPGQAVSMKRMGIEAIYLGGWATSAKGSSTEDPGPDLASYPLSQVPDDAAVLVRALLTADRNQHYLRLQMSERQRAATPAYDFRPFIIADADTGHGGDPHVRNLIRRFVEVGVPGYHIEDQRPGTKKCGHQGGKVLVPSDEQIKRLNAARFQLDIMRVPGIIVARTDAEAANLIDSRADERDQPFLLGATKLDVPSYKSCFLAMVRRFYELGVKELNGHLLYALGDSEYAAAGGWLERQGIFGLVSDAVNAWREDGQQSIDGIFDQVESRFVAAWEDDAGLMTYGEAVADVLEFGQSEGEPIGMAPEEWRAFAARASLHAARAKAKELGADPPWDCELAKTPEGYYQIRGGIPYAIAKSLAAAPFADILWMETKTADLADARQFAEAIHAEFPDQMLAYNLSPSFNWDTTGMTDEEMRRFPEELGKMGFVFNFITYGGHQIDGVAAEEFATALRQDGMLALARLQRKMRLVESPYRTPQTLVGGPRSDAALAASSGRTATTKAMGKGSTQHQHLVQTEVPRKLLEEWLAMWSGHYQLKDKLRVQLRPQRAGSEVLELGIHGESDDKLANVIFQPIQDRRGRTILLVRDQNTFGAELRQKRLMTLIHLWLVHRFKAQAVHYVTPTDDNLYQTSKMKSHGIFTEVNQEVGEIIVAEVNHPRIAELLTPDRVALRKLITKEA</sequence>